<reference key="1">
    <citation type="journal article" date="2015" name="Genome Announc.">
        <title>Genome sequence of the AIDS-associated pathogen Penicillium marneffei (ATCC18224) and its near taxonomic relative Talaromyces stipitatus (ATCC10500).</title>
        <authorList>
            <person name="Nierman W.C."/>
            <person name="Fedorova-Abrams N.D."/>
            <person name="Andrianopoulos A."/>
        </authorList>
    </citation>
    <scope>NUCLEOTIDE SEQUENCE [LARGE SCALE GENOMIC DNA]</scope>
    <source>
        <strain>ATCC 18224 / CBS 334.59 / QM 7333</strain>
    </source>
</reference>
<organism>
    <name type="scientific">Talaromyces marneffei (strain ATCC 18224 / CBS 334.59 / QM 7333)</name>
    <name type="common">Penicillium marneffei</name>
    <dbReference type="NCBI Taxonomy" id="441960"/>
    <lineage>
        <taxon>Eukaryota</taxon>
        <taxon>Fungi</taxon>
        <taxon>Dikarya</taxon>
        <taxon>Ascomycota</taxon>
        <taxon>Pezizomycotina</taxon>
        <taxon>Eurotiomycetes</taxon>
        <taxon>Eurotiomycetidae</taxon>
        <taxon>Eurotiales</taxon>
        <taxon>Trichocomaceae</taxon>
        <taxon>Talaromyces</taxon>
        <taxon>Talaromyces sect. Talaromyces</taxon>
    </lineage>
</organism>
<evidence type="ECO:0000255" key="1">
    <source>
        <dbReference type="HAMAP-Rule" id="MF_03115"/>
    </source>
</evidence>
<protein>
    <recommendedName>
        <fullName evidence="1">Fe-S cluster assembly protein dre2</fullName>
    </recommendedName>
    <alternativeName>
        <fullName evidence="1">Anamorsin homolog</fullName>
    </alternativeName>
</protein>
<proteinExistence type="inferred from homology"/>
<sequence>MPSLPVLIDTTPDFDFAPAQDATQKRTLLLAPPSIAAHEEKLRDIFATFDRSVTDLQMLDRLSAGFVTLPASAYDLVLVLTDTNGARRNEALGLLTRDVFNVLTPAMKPSAQLKLQDGPFQATEGREAILAGLVENNGAFEKPQYQEAAVPLRFGLKKKNKVAPEPVKVESVGFVDNYDDDELIDEDDLLAEEDLGRPVQQPAECKPDIAKKRRRACKDCTCGLAAQLEAEDAERREKANAELNVLKLKTDELNDEVDFTVQGKTGSCNSCSLGDAFRCEGCPFIGLPAFKPGEEVRIMNDMAQL</sequence>
<dbReference type="EMBL" id="DS995900">
    <property type="protein sequence ID" value="EEA25325.1"/>
    <property type="molecule type" value="Genomic_DNA"/>
</dbReference>
<dbReference type="RefSeq" id="XP_002145872.1">
    <property type="nucleotide sequence ID" value="XM_002145836.1"/>
</dbReference>
<dbReference type="STRING" id="441960.B6QAR7"/>
<dbReference type="VEuPathDB" id="FungiDB:PMAA_064400"/>
<dbReference type="HOGENOM" id="CLU_067152_1_0_1"/>
<dbReference type="OrthoDB" id="5808at28568"/>
<dbReference type="PhylomeDB" id="B6QAR7"/>
<dbReference type="Proteomes" id="UP000001294">
    <property type="component" value="Unassembled WGS sequence"/>
</dbReference>
<dbReference type="GO" id="GO:0005758">
    <property type="term" value="C:mitochondrial intermembrane space"/>
    <property type="evidence" value="ECO:0007669"/>
    <property type="project" value="UniProtKB-SubCell"/>
</dbReference>
<dbReference type="GO" id="GO:0051537">
    <property type="term" value="F:2 iron, 2 sulfur cluster binding"/>
    <property type="evidence" value="ECO:0007669"/>
    <property type="project" value="UniProtKB-UniRule"/>
</dbReference>
<dbReference type="GO" id="GO:0051539">
    <property type="term" value="F:4 iron, 4 sulfur cluster binding"/>
    <property type="evidence" value="ECO:0007669"/>
    <property type="project" value="UniProtKB-KW"/>
</dbReference>
<dbReference type="GO" id="GO:0009055">
    <property type="term" value="F:electron transfer activity"/>
    <property type="evidence" value="ECO:0007669"/>
    <property type="project" value="UniProtKB-UniRule"/>
</dbReference>
<dbReference type="GO" id="GO:0046872">
    <property type="term" value="F:metal ion binding"/>
    <property type="evidence" value="ECO:0007669"/>
    <property type="project" value="UniProtKB-KW"/>
</dbReference>
<dbReference type="GO" id="GO:0016226">
    <property type="term" value="P:iron-sulfur cluster assembly"/>
    <property type="evidence" value="ECO:0007669"/>
    <property type="project" value="UniProtKB-UniRule"/>
</dbReference>
<dbReference type="Gene3D" id="3.40.50.11000">
    <property type="entry name" value="Fe-S cluster assembly protein Dre2, N-terminal domain"/>
    <property type="match status" value="1"/>
</dbReference>
<dbReference type="HAMAP" id="MF_03115">
    <property type="entry name" value="Anamorsin"/>
    <property type="match status" value="1"/>
</dbReference>
<dbReference type="InterPro" id="IPR007785">
    <property type="entry name" value="Anamorsin"/>
</dbReference>
<dbReference type="InterPro" id="IPR046408">
    <property type="entry name" value="CIAPIN1"/>
</dbReference>
<dbReference type="InterPro" id="IPR031838">
    <property type="entry name" value="Dre2_N"/>
</dbReference>
<dbReference type="PANTHER" id="PTHR13273">
    <property type="entry name" value="ANAMORSIN"/>
    <property type="match status" value="1"/>
</dbReference>
<dbReference type="PANTHER" id="PTHR13273:SF14">
    <property type="entry name" value="ANAMORSIN"/>
    <property type="match status" value="1"/>
</dbReference>
<dbReference type="Pfam" id="PF05093">
    <property type="entry name" value="CIAPIN1"/>
    <property type="match status" value="1"/>
</dbReference>
<dbReference type="Pfam" id="PF16803">
    <property type="entry name" value="DRE2_N"/>
    <property type="match status" value="1"/>
</dbReference>
<keyword id="KW-0001">2Fe-2S</keyword>
<keyword id="KW-0004">4Fe-4S</keyword>
<keyword id="KW-0963">Cytoplasm</keyword>
<keyword id="KW-0408">Iron</keyword>
<keyword id="KW-0411">Iron-sulfur</keyword>
<keyword id="KW-0479">Metal-binding</keyword>
<keyword id="KW-0496">Mitochondrion</keyword>
<keyword id="KW-1185">Reference proteome</keyword>
<feature type="chain" id="PRO_0000392399" description="Fe-S cluster assembly protein dre2">
    <location>
        <begin position="1"/>
        <end position="305"/>
    </location>
</feature>
<feature type="region of interest" description="N-terminal SAM-like domain" evidence="1">
    <location>
        <begin position="21"/>
        <end position="150"/>
    </location>
</feature>
<feature type="region of interest" description="Linker" evidence="1">
    <location>
        <begin position="151"/>
        <end position="195"/>
    </location>
</feature>
<feature type="region of interest" description="Fe-S binding site A" evidence="1">
    <location>
        <begin position="205"/>
        <end position="222"/>
    </location>
</feature>
<feature type="region of interest" description="Fe-S binding site B" evidence="1">
    <location>
        <begin position="268"/>
        <end position="282"/>
    </location>
</feature>
<feature type="short sequence motif" description="Cx2C motif 1" evidence="1">
    <location>
        <begin position="268"/>
        <end position="271"/>
    </location>
</feature>
<feature type="short sequence motif" description="Cx2C motif 2" evidence="1">
    <location>
        <begin position="279"/>
        <end position="282"/>
    </location>
</feature>
<feature type="binding site" evidence="1">
    <location>
        <position position="205"/>
    </location>
    <ligand>
        <name>[2Fe-2S] cluster</name>
        <dbReference type="ChEBI" id="CHEBI:190135"/>
    </ligand>
</feature>
<feature type="binding site" evidence="1">
    <location>
        <position position="217"/>
    </location>
    <ligand>
        <name>[2Fe-2S] cluster</name>
        <dbReference type="ChEBI" id="CHEBI:190135"/>
    </ligand>
</feature>
<feature type="binding site" evidence="1">
    <location>
        <position position="220"/>
    </location>
    <ligand>
        <name>[2Fe-2S] cluster</name>
        <dbReference type="ChEBI" id="CHEBI:190135"/>
    </ligand>
</feature>
<feature type="binding site" evidence="1">
    <location>
        <position position="222"/>
    </location>
    <ligand>
        <name>[2Fe-2S] cluster</name>
        <dbReference type="ChEBI" id="CHEBI:190135"/>
    </ligand>
</feature>
<feature type="binding site" evidence="1">
    <location>
        <position position="268"/>
    </location>
    <ligand>
        <name>[4Fe-4S] cluster</name>
        <dbReference type="ChEBI" id="CHEBI:49883"/>
    </ligand>
</feature>
<feature type="binding site" evidence="1">
    <location>
        <position position="271"/>
    </location>
    <ligand>
        <name>[4Fe-4S] cluster</name>
        <dbReference type="ChEBI" id="CHEBI:49883"/>
    </ligand>
</feature>
<feature type="binding site" evidence="1">
    <location>
        <position position="279"/>
    </location>
    <ligand>
        <name>[4Fe-4S] cluster</name>
        <dbReference type="ChEBI" id="CHEBI:49883"/>
    </ligand>
</feature>
<feature type="binding site" evidence="1">
    <location>
        <position position="282"/>
    </location>
    <ligand>
        <name>[4Fe-4S] cluster</name>
        <dbReference type="ChEBI" id="CHEBI:49883"/>
    </ligand>
</feature>
<accession>B6QAR7</accession>
<name>DRE2_TALMQ</name>
<comment type="function">
    <text evidence="1">Component of the cytosolic iron-sulfur (Fe-S) protein assembly (CIA) machinery required for the maturation of extramitochondrial Fe-S proteins. Part of an electron transfer chain functioning in an early step of cytosolic Fe-S biogenesis, facilitating the de novo assembly of a [4Fe-4S] cluster on the scaffold complex cfd1-nbp35. Electrons are transferred to dre2 from NADPH via the FAD- and FMN-containing protein tah18. Tah18-dre2 are also required for the assembly of the diferric tyrosyl radical cofactor of ribonucleotide reductase (RNR), probably by providing electrons for reduction during radical cofactor maturation in the catalytic small subunit rnr2.</text>
</comment>
<comment type="cofactor">
    <cofactor evidence="1">
        <name>[2Fe-2S] cluster</name>
        <dbReference type="ChEBI" id="CHEBI:190135"/>
    </cofactor>
</comment>
<comment type="cofactor">
    <cofactor evidence="1">
        <name>[4Fe-4S] cluster</name>
        <dbReference type="ChEBI" id="CHEBI:49883"/>
    </cofactor>
</comment>
<comment type="subunit">
    <text evidence="1">Monomer. Interacts with tah18. Interacts with mia40.</text>
</comment>
<comment type="subcellular location">
    <subcellularLocation>
        <location evidence="1">Cytoplasm</location>
    </subcellularLocation>
    <subcellularLocation>
        <location evidence="1">Mitochondrion intermembrane space</location>
    </subcellularLocation>
</comment>
<comment type="domain">
    <text evidence="1">The C-terminal domain binds 2 Fe-S clusters but is otherwise mostly in an intrinsically disordered conformation.</text>
</comment>
<comment type="domain">
    <text evidence="1">The N-terminal domain has structural similarity with S-adenosyl-L-methionine-dependent methyltransferases, but does not bind S-adenosyl-L-methionine. It is required for correct assembly of the 2 Fe-S clusters.</text>
</comment>
<comment type="domain">
    <text evidence="1">The twin Cx2C motifs are involved in the recognition by the mitochondrial mia40-erv1 disulfide relay system. The formation of 2 disulfide bonds in the Cx2C motifs through dithiol/disulfide exchange reactions effectively traps the protein in the mitochondrial intermembrane space.</text>
</comment>
<comment type="similarity">
    <text evidence="1">Belongs to the anamorsin family.</text>
</comment>
<gene>
    <name evidence="1" type="primary">dre2</name>
    <name type="ORF">PMAA_064400</name>
</gene>